<proteinExistence type="inferred from homology"/>
<evidence type="ECO:0000255" key="1">
    <source>
        <dbReference type="HAMAP-Rule" id="MF_00086"/>
    </source>
</evidence>
<accession>A5WDU0</accession>
<feature type="chain" id="PRO_1000071241" description="S-adenosylmethionine synthase">
    <location>
        <begin position="1"/>
        <end position="388"/>
    </location>
</feature>
<feature type="region of interest" description="Flexible loop" evidence="1">
    <location>
        <begin position="100"/>
        <end position="110"/>
    </location>
</feature>
<feature type="binding site" description="in other chain" evidence="1">
    <location>
        <position position="16"/>
    </location>
    <ligand>
        <name>ATP</name>
        <dbReference type="ChEBI" id="CHEBI:30616"/>
        <note>ligand shared between two neighboring subunits</note>
    </ligand>
</feature>
<feature type="binding site" evidence="1">
    <location>
        <position position="18"/>
    </location>
    <ligand>
        <name>Mg(2+)</name>
        <dbReference type="ChEBI" id="CHEBI:18420"/>
    </ligand>
</feature>
<feature type="binding site" evidence="1">
    <location>
        <position position="44"/>
    </location>
    <ligand>
        <name>K(+)</name>
        <dbReference type="ChEBI" id="CHEBI:29103"/>
    </ligand>
</feature>
<feature type="binding site" description="in other chain" evidence="1">
    <location>
        <position position="57"/>
    </location>
    <ligand>
        <name>L-methionine</name>
        <dbReference type="ChEBI" id="CHEBI:57844"/>
        <note>ligand shared between two neighboring subunits</note>
    </ligand>
</feature>
<feature type="binding site" description="in other chain" evidence="1">
    <location>
        <position position="100"/>
    </location>
    <ligand>
        <name>L-methionine</name>
        <dbReference type="ChEBI" id="CHEBI:57844"/>
        <note>ligand shared between two neighboring subunits</note>
    </ligand>
</feature>
<feature type="binding site" description="in other chain" evidence="1">
    <location>
        <begin position="165"/>
        <end position="167"/>
    </location>
    <ligand>
        <name>ATP</name>
        <dbReference type="ChEBI" id="CHEBI:30616"/>
        <note>ligand shared between two neighboring subunits</note>
    </ligand>
</feature>
<feature type="binding site" description="in other chain" evidence="1">
    <location>
        <begin position="231"/>
        <end position="232"/>
    </location>
    <ligand>
        <name>ATP</name>
        <dbReference type="ChEBI" id="CHEBI:30616"/>
        <note>ligand shared between two neighboring subunits</note>
    </ligand>
</feature>
<feature type="binding site" evidence="1">
    <location>
        <position position="240"/>
    </location>
    <ligand>
        <name>ATP</name>
        <dbReference type="ChEBI" id="CHEBI:30616"/>
        <note>ligand shared between two neighboring subunits</note>
    </ligand>
</feature>
<feature type="binding site" evidence="1">
    <location>
        <position position="240"/>
    </location>
    <ligand>
        <name>L-methionine</name>
        <dbReference type="ChEBI" id="CHEBI:57844"/>
        <note>ligand shared between two neighboring subunits</note>
    </ligand>
</feature>
<feature type="binding site" description="in other chain" evidence="1">
    <location>
        <begin position="246"/>
        <end position="247"/>
    </location>
    <ligand>
        <name>ATP</name>
        <dbReference type="ChEBI" id="CHEBI:30616"/>
        <note>ligand shared between two neighboring subunits</note>
    </ligand>
</feature>
<feature type="binding site" evidence="1">
    <location>
        <position position="263"/>
    </location>
    <ligand>
        <name>ATP</name>
        <dbReference type="ChEBI" id="CHEBI:30616"/>
        <note>ligand shared between two neighboring subunits</note>
    </ligand>
</feature>
<feature type="binding site" evidence="1">
    <location>
        <position position="267"/>
    </location>
    <ligand>
        <name>ATP</name>
        <dbReference type="ChEBI" id="CHEBI:30616"/>
        <note>ligand shared between two neighboring subunits</note>
    </ligand>
</feature>
<feature type="binding site" description="in other chain" evidence="1">
    <location>
        <position position="271"/>
    </location>
    <ligand>
        <name>L-methionine</name>
        <dbReference type="ChEBI" id="CHEBI:57844"/>
        <note>ligand shared between two neighboring subunits</note>
    </ligand>
</feature>
<reference key="1">
    <citation type="submission" date="2007-05" db="EMBL/GenBank/DDBJ databases">
        <title>Complete sequence of chromosome of Psychrobacter sp. PRwf-1.</title>
        <authorList>
            <consortium name="US DOE Joint Genome Institute"/>
            <person name="Copeland A."/>
            <person name="Lucas S."/>
            <person name="Lapidus A."/>
            <person name="Barry K."/>
            <person name="Detter J.C."/>
            <person name="Glavina del Rio T."/>
            <person name="Hammon N."/>
            <person name="Israni S."/>
            <person name="Dalin E."/>
            <person name="Tice H."/>
            <person name="Pitluck S."/>
            <person name="Chain P."/>
            <person name="Malfatti S."/>
            <person name="Shin M."/>
            <person name="Vergez L."/>
            <person name="Schmutz J."/>
            <person name="Larimer F."/>
            <person name="Land M."/>
            <person name="Hauser L."/>
            <person name="Kyrpides N."/>
            <person name="Kim E."/>
            <person name="Tiedje J."/>
            <person name="Richardson P."/>
        </authorList>
    </citation>
    <scope>NUCLEOTIDE SEQUENCE [LARGE SCALE GENOMIC DNA]</scope>
    <source>
        <strain>PRwf-1</strain>
    </source>
</reference>
<name>METK_PSYWF</name>
<gene>
    <name evidence="1" type="primary">metK</name>
    <name type="ordered locus">PsycPRwf_0879</name>
</gene>
<comment type="function">
    <text evidence="1">Catalyzes the formation of S-adenosylmethionine (AdoMet) from methionine and ATP. The overall synthetic reaction is composed of two sequential steps, AdoMet formation and the subsequent tripolyphosphate hydrolysis which occurs prior to release of AdoMet from the enzyme.</text>
</comment>
<comment type="catalytic activity">
    <reaction evidence="1">
        <text>L-methionine + ATP + H2O = S-adenosyl-L-methionine + phosphate + diphosphate</text>
        <dbReference type="Rhea" id="RHEA:21080"/>
        <dbReference type="ChEBI" id="CHEBI:15377"/>
        <dbReference type="ChEBI" id="CHEBI:30616"/>
        <dbReference type="ChEBI" id="CHEBI:33019"/>
        <dbReference type="ChEBI" id="CHEBI:43474"/>
        <dbReference type="ChEBI" id="CHEBI:57844"/>
        <dbReference type="ChEBI" id="CHEBI:59789"/>
        <dbReference type="EC" id="2.5.1.6"/>
    </reaction>
</comment>
<comment type="cofactor">
    <cofactor evidence="1">
        <name>Mg(2+)</name>
        <dbReference type="ChEBI" id="CHEBI:18420"/>
    </cofactor>
    <text evidence="1">Binds 2 divalent ions per subunit.</text>
</comment>
<comment type="cofactor">
    <cofactor evidence="1">
        <name>K(+)</name>
        <dbReference type="ChEBI" id="CHEBI:29103"/>
    </cofactor>
    <text evidence="1">Binds 1 potassium ion per subunit.</text>
</comment>
<comment type="pathway">
    <text evidence="1">Amino-acid biosynthesis; S-adenosyl-L-methionine biosynthesis; S-adenosyl-L-methionine from L-methionine: step 1/1.</text>
</comment>
<comment type="subunit">
    <text evidence="1">Homotetramer; dimer of dimers.</text>
</comment>
<comment type="subcellular location">
    <subcellularLocation>
        <location evidence="1">Cytoplasm</location>
    </subcellularLocation>
</comment>
<comment type="similarity">
    <text evidence="1">Belongs to the AdoMet synthase family.</text>
</comment>
<organism>
    <name type="scientific">Psychrobacter sp. (strain PRwf-1)</name>
    <dbReference type="NCBI Taxonomy" id="349106"/>
    <lineage>
        <taxon>Bacteria</taxon>
        <taxon>Pseudomonadati</taxon>
        <taxon>Pseudomonadota</taxon>
        <taxon>Gammaproteobacteria</taxon>
        <taxon>Moraxellales</taxon>
        <taxon>Moraxellaceae</taxon>
        <taxon>Psychrobacter</taxon>
    </lineage>
</organism>
<dbReference type="EC" id="2.5.1.6" evidence="1"/>
<dbReference type="EMBL" id="CP000713">
    <property type="protein sequence ID" value="ABQ93831.1"/>
    <property type="molecule type" value="Genomic_DNA"/>
</dbReference>
<dbReference type="SMR" id="A5WDU0"/>
<dbReference type="STRING" id="349106.PsycPRwf_0879"/>
<dbReference type="KEGG" id="prw:PsycPRwf_0879"/>
<dbReference type="eggNOG" id="COG0192">
    <property type="taxonomic scope" value="Bacteria"/>
</dbReference>
<dbReference type="HOGENOM" id="CLU_041802_1_1_6"/>
<dbReference type="UniPathway" id="UPA00315">
    <property type="reaction ID" value="UER00080"/>
</dbReference>
<dbReference type="GO" id="GO:0005737">
    <property type="term" value="C:cytoplasm"/>
    <property type="evidence" value="ECO:0007669"/>
    <property type="project" value="UniProtKB-SubCell"/>
</dbReference>
<dbReference type="GO" id="GO:0005524">
    <property type="term" value="F:ATP binding"/>
    <property type="evidence" value="ECO:0007669"/>
    <property type="project" value="UniProtKB-UniRule"/>
</dbReference>
<dbReference type="GO" id="GO:0000287">
    <property type="term" value="F:magnesium ion binding"/>
    <property type="evidence" value="ECO:0007669"/>
    <property type="project" value="UniProtKB-UniRule"/>
</dbReference>
<dbReference type="GO" id="GO:0004478">
    <property type="term" value="F:methionine adenosyltransferase activity"/>
    <property type="evidence" value="ECO:0007669"/>
    <property type="project" value="UniProtKB-UniRule"/>
</dbReference>
<dbReference type="GO" id="GO:0006730">
    <property type="term" value="P:one-carbon metabolic process"/>
    <property type="evidence" value="ECO:0007669"/>
    <property type="project" value="UniProtKB-KW"/>
</dbReference>
<dbReference type="GO" id="GO:0006556">
    <property type="term" value="P:S-adenosylmethionine biosynthetic process"/>
    <property type="evidence" value="ECO:0007669"/>
    <property type="project" value="UniProtKB-UniRule"/>
</dbReference>
<dbReference type="CDD" id="cd18079">
    <property type="entry name" value="S-AdoMet_synt"/>
    <property type="match status" value="1"/>
</dbReference>
<dbReference type="FunFam" id="3.30.300.10:FF:000003">
    <property type="entry name" value="S-adenosylmethionine synthase"/>
    <property type="match status" value="1"/>
</dbReference>
<dbReference type="Gene3D" id="3.30.300.10">
    <property type="match status" value="3"/>
</dbReference>
<dbReference type="HAMAP" id="MF_00086">
    <property type="entry name" value="S_AdoMet_synth1"/>
    <property type="match status" value="1"/>
</dbReference>
<dbReference type="InterPro" id="IPR022631">
    <property type="entry name" value="ADOMET_SYNTHASE_CS"/>
</dbReference>
<dbReference type="InterPro" id="IPR022630">
    <property type="entry name" value="S-AdoMet_synt_C"/>
</dbReference>
<dbReference type="InterPro" id="IPR022629">
    <property type="entry name" value="S-AdoMet_synt_central"/>
</dbReference>
<dbReference type="InterPro" id="IPR022628">
    <property type="entry name" value="S-AdoMet_synt_N"/>
</dbReference>
<dbReference type="InterPro" id="IPR002133">
    <property type="entry name" value="S-AdoMet_synthetase"/>
</dbReference>
<dbReference type="InterPro" id="IPR022636">
    <property type="entry name" value="S-AdoMet_synthetase_sfam"/>
</dbReference>
<dbReference type="NCBIfam" id="TIGR01034">
    <property type="entry name" value="metK"/>
    <property type="match status" value="1"/>
</dbReference>
<dbReference type="PANTHER" id="PTHR11964">
    <property type="entry name" value="S-ADENOSYLMETHIONINE SYNTHETASE"/>
    <property type="match status" value="1"/>
</dbReference>
<dbReference type="Pfam" id="PF02773">
    <property type="entry name" value="S-AdoMet_synt_C"/>
    <property type="match status" value="1"/>
</dbReference>
<dbReference type="Pfam" id="PF02772">
    <property type="entry name" value="S-AdoMet_synt_M"/>
    <property type="match status" value="1"/>
</dbReference>
<dbReference type="Pfam" id="PF00438">
    <property type="entry name" value="S-AdoMet_synt_N"/>
    <property type="match status" value="1"/>
</dbReference>
<dbReference type="PIRSF" id="PIRSF000497">
    <property type="entry name" value="MAT"/>
    <property type="match status" value="1"/>
</dbReference>
<dbReference type="SUPFAM" id="SSF55973">
    <property type="entry name" value="S-adenosylmethionine synthetase"/>
    <property type="match status" value="3"/>
</dbReference>
<dbReference type="PROSITE" id="PS00376">
    <property type="entry name" value="ADOMET_SYNTHASE_1"/>
    <property type="match status" value="1"/>
</dbReference>
<dbReference type="PROSITE" id="PS00377">
    <property type="entry name" value="ADOMET_SYNTHASE_2"/>
    <property type="match status" value="1"/>
</dbReference>
<protein>
    <recommendedName>
        <fullName evidence="1">S-adenosylmethionine synthase</fullName>
        <shortName evidence="1">AdoMet synthase</shortName>
        <ecNumber evidence="1">2.5.1.6</ecNumber>
    </recommendedName>
    <alternativeName>
        <fullName evidence="1">MAT</fullName>
    </alternativeName>
    <alternativeName>
        <fullName evidence="1">Methionine adenosyltransferase</fullName>
    </alternativeName>
</protein>
<keyword id="KW-0067">ATP-binding</keyword>
<keyword id="KW-0963">Cytoplasm</keyword>
<keyword id="KW-0460">Magnesium</keyword>
<keyword id="KW-0479">Metal-binding</keyword>
<keyword id="KW-0547">Nucleotide-binding</keyword>
<keyword id="KW-0554">One-carbon metabolism</keyword>
<keyword id="KW-0630">Potassium</keyword>
<keyword id="KW-0808">Transferase</keyword>
<sequence>MHDYQLFTSESVSEGHPDKMADQISDALLDAIMREDLHARVACETLVKTGAVVLAGEISTTANIDIERIVRDTVNSIGYNHSDLGFDGETCAVINMIGKQSPEIAQGVDRMNPEDQGAGDQGLMFGYASNETEVLMPAPIEFAHRLMERQSELRRSGELKWLRPDAKAQVTLKYTNGTPSAIDAVVLSTQHDPDISQADLQEAVMENIIKHVLPADLLHAGTRYHINPTGKFVIGGPVGDAGITGRKIIVDTYGGMARHGGGAFSGKDPSKVDRSAAYAGRYVAKNIVAAGLAERCEVQISYAIGVAEPTSISVNTFGTAKVSAEVIIELIRTHFDLRPYGITHMLNLLQPMYQQTATYGHFGRPGSETAFTWEKTDKAEILRADANI</sequence>